<name>SSRP_STRS2</name>
<sequence>MAKGEGNVIAQNKKARHDYTIVDTVEAGMVLTGTEIKSIRAGRINLKDGFAQIKQGEAWLVNVHIAPYDEGNIWNQEPTRTRKLLLRKKQIESLDNEVKGTGMTLVPLKVYIKDGFAKVLIGLAKGKHDYDKRESIKRREQDRDIKRTMKAINSR</sequence>
<feature type="chain" id="PRO_1000002169" description="SsrA-binding protein">
    <location>
        <begin position="1"/>
        <end position="155"/>
    </location>
</feature>
<comment type="function">
    <text evidence="1">Required for rescue of stalled ribosomes mediated by trans-translation. Binds to transfer-messenger RNA (tmRNA), required for stable association of tmRNA with ribosomes. tmRNA and SmpB together mimic tRNA shape, replacing the anticodon stem-loop with SmpB. tmRNA is encoded by the ssrA gene; the 2 termini fold to resemble tRNA(Ala) and it encodes a 'tag peptide', a short internal open reading frame. During trans-translation Ala-aminoacylated tmRNA acts like a tRNA, entering the A-site of stalled ribosomes, displacing the stalled mRNA. The ribosome then switches to translate the ORF on the tmRNA; the nascent peptide is terminated with the 'tag peptide' encoded by the tmRNA and targeted for degradation. The ribosome is freed to recommence translation, which seems to be the essential function of trans-translation.</text>
</comment>
<comment type="subcellular location">
    <subcellularLocation>
        <location evidence="1">Cytoplasm</location>
    </subcellularLocation>
    <text evidence="1">The tmRNA-SmpB complex associates with stalled 70S ribosomes.</text>
</comment>
<comment type="similarity">
    <text evidence="1">Belongs to the SmpB family.</text>
</comment>
<evidence type="ECO:0000255" key="1">
    <source>
        <dbReference type="HAMAP-Rule" id="MF_00023"/>
    </source>
</evidence>
<protein>
    <recommendedName>
        <fullName evidence="1">SsrA-binding protein</fullName>
    </recommendedName>
    <alternativeName>
        <fullName evidence="1">Small protein B</fullName>
    </alternativeName>
</protein>
<reference key="1">
    <citation type="journal article" date="2007" name="PLoS ONE">
        <title>A glimpse of streptococcal toxic shock syndrome from comparative genomics of S. suis 2 Chinese isolates.</title>
        <authorList>
            <person name="Chen C."/>
            <person name="Tang J."/>
            <person name="Dong W."/>
            <person name="Wang C."/>
            <person name="Feng Y."/>
            <person name="Wang J."/>
            <person name="Zheng F."/>
            <person name="Pan X."/>
            <person name="Liu D."/>
            <person name="Li M."/>
            <person name="Song Y."/>
            <person name="Zhu X."/>
            <person name="Sun H."/>
            <person name="Feng T."/>
            <person name="Guo Z."/>
            <person name="Ju A."/>
            <person name="Ge J."/>
            <person name="Dong Y."/>
            <person name="Sun W."/>
            <person name="Jiang Y."/>
            <person name="Wang J."/>
            <person name="Yan J."/>
            <person name="Yang H."/>
            <person name="Wang X."/>
            <person name="Gao G.F."/>
            <person name="Yang R."/>
            <person name="Wang J."/>
            <person name="Yu J."/>
        </authorList>
    </citation>
    <scope>NUCLEOTIDE SEQUENCE [LARGE SCALE GENOMIC DNA]</scope>
    <source>
        <strain>98HAH33</strain>
    </source>
</reference>
<proteinExistence type="inferred from homology"/>
<keyword id="KW-0963">Cytoplasm</keyword>
<keyword id="KW-0694">RNA-binding</keyword>
<organism>
    <name type="scientific">Streptococcus suis (strain 98HAH33)</name>
    <dbReference type="NCBI Taxonomy" id="391296"/>
    <lineage>
        <taxon>Bacteria</taxon>
        <taxon>Bacillati</taxon>
        <taxon>Bacillota</taxon>
        <taxon>Bacilli</taxon>
        <taxon>Lactobacillales</taxon>
        <taxon>Streptococcaceae</taxon>
        <taxon>Streptococcus</taxon>
    </lineage>
</organism>
<accession>A4W2H3</accession>
<dbReference type="EMBL" id="CP000408">
    <property type="protein sequence ID" value="ABP92562.1"/>
    <property type="molecule type" value="Genomic_DNA"/>
</dbReference>
<dbReference type="SMR" id="A4W2H3"/>
<dbReference type="KEGG" id="ssv:SSU98_1404"/>
<dbReference type="HOGENOM" id="CLU_108953_0_0_9"/>
<dbReference type="GO" id="GO:0005829">
    <property type="term" value="C:cytosol"/>
    <property type="evidence" value="ECO:0007669"/>
    <property type="project" value="TreeGrafter"/>
</dbReference>
<dbReference type="GO" id="GO:0003723">
    <property type="term" value="F:RNA binding"/>
    <property type="evidence" value="ECO:0007669"/>
    <property type="project" value="UniProtKB-UniRule"/>
</dbReference>
<dbReference type="GO" id="GO:0070929">
    <property type="term" value="P:trans-translation"/>
    <property type="evidence" value="ECO:0007669"/>
    <property type="project" value="UniProtKB-UniRule"/>
</dbReference>
<dbReference type="CDD" id="cd09294">
    <property type="entry name" value="SmpB"/>
    <property type="match status" value="1"/>
</dbReference>
<dbReference type="Gene3D" id="2.40.280.10">
    <property type="match status" value="1"/>
</dbReference>
<dbReference type="HAMAP" id="MF_00023">
    <property type="entry name" value="SmpB"/>
    <property type="match status" value="1"/>
</dbReference>
<dbReference type="InterPro" id="IPR023620">
    <property type="entry name" value="SmpB"/>
</dbReference>
<dbReference type="InterPro" id="IPR000037">
    <property type="entry name" value="SsrA-bd_prot"/>
</dbReference>
<dbReference type="InterPro" id="IPR020081">
    <property type="entry name" value="SsrA-bd_prot_CS"/>
</dbReference>
<dbReference type="NCBIfam" id="NF003843">
    <property type="entry name" value="PRK05422.1"/>
    <property type="match status" value="1"/>
</dbReference>
<dbReference type="NCBIfam" id="TIGR00086">
    <property type="entry name" value="smpB"/>
    <property type="match status" value="1"/>
</dbReference>
<dbReference type="PANTHER" id="PTHR30308:SF2">
    <property type="entry name" value="SSRA-BINDING PROTEIN"/>
    <property type="match status" value="1"/>
</dbReference>
<dbReference type="PANTHER" id="PTHR30308">
    <property type="entry name" value="TMRNA-BINDING COMPONENT OF TRANS-TRANSLATION TAGGING COMPLEX"/>
    <property type="match status" value="1"/>
</dbReference>
<dbReference type="Pfam" id="PF01668">
    <property type="entry name" value="SmpB"/>
    <property type="match status" value="1"/>
</dbReference>
<dbReference type="SUPFAM" id="SSF74982">
    <property type="entry name" value="Small protein B (SmpB)"/>
    <property type="match status" value="1"/>
</dbReference>
<dbReference type="PROSITE" id="PS01317">
    <property type="entry name" value="SSRP"/>
    <property type="match status" value="1"/>
</dbReference>
<gene>
    <name evidence="1" type="primary">smpB</name>
    <name type="ordered locus">SSU98_1404</name>
</gene>